<gene>
    <name evidence="1 4" type="primary">lapA</name>
    <name type="synonym">yciS</name>
    <name type="ordered locus">b1279</name>
    <name type="ordered locus">JW1271</name>
</gene>
<dbReference type="EMBL" id="U00096">
    <property type="protein sequence ID" value="AAC74361.1"/>
    <property type="molecule type" value="Genomic_DNA"/>
</dbReference>
<dbReference type="EMBL" id="AP009048">
    <property type="protein sequence ID" value="BAA14833.1"/>
    <property type="molecule type" value="Genomic_DNA"/>
</dbReference>
<dbReference type="PIR" id="B64876">
    <property type="entry name" value="B64876"/>
</dbReference>
<dbReference type="RefSeq" id="NP_415795.1">
    <property type="nucleotide sequence ID" value="NC_000913.3"/>
</dbReference>
<dbReference type="RefSeq" id="WP_000876286.1">
    <property type="nucleotide sequence ID" value="NZ_STEB01000005.1"/>
</dbReference>
<dbReference type="SMR" id="P0ACV4"/>
<dbReference type="BioGRID" id="4260130">
    <property type="interactions" value="32"/>
</dbReference>
<dbReference type="DIP" id="DIP-47880N"/>
<dbReference type="FunCoup" id="P0ACV4">
    <property type="interactions" value="87"/>
</dbReference>
<dbReference type="IntAct" id="P0ACV4">
    <property type="interactions" value="20"/>
</dbReference>
<dbReference type="STRING" id="511145.b1279"/>
<dbReference type="jPOST" id="P0ACV4"/>
<dbReference type="PaxDb" id="511145-b1279"/>
<dbReference type="EnsemblBacteria" id="AAC74361">
    <property type="protein sequence ID" value="AAC74361"/>
    <property type="gene ID" value="b1279"/>
</dbReference>
<dbReference type="GeneID" id="75203392"/>
<dbReference type="GeneID" id="944936"/>
<dbReference type="KEGG" id="ecj:JW1271"/>
<dbReference type="KEGG" id="eco:b1279"/>
<dbReference type="KEGG" id="ecoc:C3026_07510"/>
<dbReference type="PATRIC" id="fig|1411691.4.peg.1002"/>
<dbReference type="EchoBASE" id="EB3663"/>
<dbReference type="eggNOG" id="COG3771">
    <property type="taxonomic scope" value="Bacteria"/>
</dbReference>
<dbReference type="HOGENOM" id="CLU_160072_0_0_6"/>
<dbReference type="InParanoid" id="P0ACV4"/>
<dbReference type="OMA" id="IFAMYHI"/>
<dbReference type="OrthoDB" id="7064015at2"/>
<dbReference type="PhylomeDB" id="P0ACV4"/>
<dbReference type="BioCyc" id="EcoCyc:G6637-MONOMER"/>
<dbReference type="PRO" id="PR:P0ACV4"/>
<dbReference type="Proteomes" id="UP000000625">
    <property type="component" value="Chromosome"/>
</dbReference>
<dbReference type="GO" id="GO:0005886">
    <property type="term" value="C:plasma membrane"/>
    <property type="evidence" value="ECO:0000314"/>
    <property type="project" value="EcoCyc"/>
</dbReference>
<dbReference type="GO" id="GO:0008653">
    <property type="term" value="P:lipopolysaccharide metabolic process"/>
    <property type="evidence" value="ECO:0007669"/>
    <property type="project" value="InterPro"/>
</dbReference>
<dbReference type="HAMAP" id="MF_01948">
    <property type="entry name" value="LPS_assembly_LapA"/>
    <property type="match status" value="1"/>
</dbReference>
<dbReference type="InterPro" id="IPR032906">
    <property type="entry name" value="LapA"/>
</dbReference>
<dbReference type="InterPro" id="IPR010445">
    <property type="entry name" value="LapA_dom"/>
</dbReference>
<dbReference type="Pfam" id="PF06305">
    <property type="entry name" value="LapA_dom"/>
    <property type="match status" value="1"/>
</dbReference>
<evidence type="ECO:0000255" key="1">
    <source>
        <dbReference type="HAMAP-Rule" id="MF_01948"/>
    </source>
</evidence>
<evidence type="ECO:0000269" key="2">
    <source>
    </source>
</evidence>
<evidence type="ECO:0000269" key="3">
    <source>
    </source>
</evidence>
<evidence type="ECO:0000303" key="4">
    <source>
    </source>
</evidence>
<evidence type="ECO:0000305" key="5"/>
<accession>P0ACV4</accession>
<accession>P77614</accession>
<keyword id="KW-0997">Cell inner membrane</keyword>
<keyword id="KW-1003">Cell membrane</keyword>
<keyword id="KW-0175">Coiled coil</keyword>
<keyword id="KW-0472">Membrane</keyword>
<keyword id="KW-1185">Reference proteome</keyword>
<keyword id="KW-0346">Stress response</keyword>
<keyword id="KW-0812">Transmembrane</keyword>
<keyword id="KW-1133">Transmembrane helix</keyword>
<sequence length="102" mass="11351">MKYLLIFLLVLAIFVISVTLGAQNDQQVTFNYLLAQGEYRISTLLAVLFAAGFAIGWLICGLFWLRVRVSLARAERKIKRLENQLSPATDVAVVPHSSAAKE</sequence>
<name>LAPA_ECOLI</name>
<reference key="1">
    <citation type="journal article" date="1996" name="DNA Res.">
        <title>A 570-kb DNA sequence of the Escherichia coli K-12 genome corresponding to the 28.0-40.1 min region on the linkage map.</title>
        <authorList>
            <person name="Aiba H."/>
            <person name="Baba T."/>
            <person name="Fujita K."/>
            <person name="Hayashi K."/>
            <person name="Inada T."/>
            <person name="Isono K."/>
            <person name="Itoh T."/>
            <person name="Kasai H."/>
            <person name="Kashimoto K."/>
            <person name="Kimura S."/>
            <person name="Kitakawa M."/>
            <person name="Kitagawa M."/>
            <person name="Makino K."/>
            <person name="Miki T."/>
            <person name="Mizobuchi K."/>
            <person name="Mori H."/>
            <person name="Mori T."/>
            <person name="Motomura K."/>
            <person name="Nakade S."/>
            <person name="Nakamura Y."/>
            <person name="Nashimoto H."/>
            <person name="Nishio Y."/>
            <person name="Oshima T."/>
            <person name="Saito N."/>
            <person name="Sampei G."/>
            <person name="Seki Y."/>
            <person name="Sivasundaram S."/>
            <person name="Tagami H."/>
            <person name="Takeda J."/>
            <person name="Takemoto K."/>
            <person name="Takeuchi Y."/>
            <person name="Wada C."/>
            <person name="Yamamoto Y."/>
            <person name="Horiuchi T."/>
        </authorList>
    </citation>
    <scope>NUCLEOTIDE SEQUENCE [LARGE SCALE GENOMIC DNA]</scope>
    <source>
        <strain>K12 / W3110 / ATCC 27325 / DSM 5911</strain>
    </source>
</reference>
<reference key="2">
    <citation type="journal article" date="1997" name="Science">
        <title>The complete genome sequence of Escherichia coli K-12.</title>
        <authorList>
            <person name="Blattner F.R."/>
            <person name="Plunkett G. III"/>
            <person name="Bloch C.A."/>
            <person name="Perna N.T."/>
            <person name="Burland V."/>
            <person name="Riley M."/>
            <person name="Collado-Vides J."/>
            <person name="Glasner J.D."/>
            <person name="Rode C.K."/>
            <person name="Mayhew G.F."/>
            <person name="Gregor J."/>
            <person name="Davis N.W."/>
            <person name="Kirkpatrick H.A."/>
            <person name="Goeden M.A."/>
            <person name="Rose D.J."/>
            <person name="Mau B."/>
            <person name="Shao Y."/>
        </authorList>
    </citation>
    <scope>NUCLEOTIDE SEQUENCE [LARGE SCALE GENOMIC DNA]</scope>
    <source>
        <strain>K12 / MG1655 / ATCC 47076</strain>
    </source>
</reference>
<reference key="3">
    <citation type="journal article" date="2006" name="Mol. Syst. Biol.">
        <title>Highly accurate genome sequences of Escherichia coli K-12 strains MG1655 and W3110.</title>
        <authorList>
            <person name="Hayashi K."/>
            <person name="Morooka N."/>
            <person name="Yamamoto Y."/>
            <person name="Fujita K."/>
            <person name="Isono K."/>
            <person name="Choi S."/>
            <person name="Ohtsubo E."/>
            <person name="Baba T."/>
            <person name="Wanner B.L."/>
            <person name="Mori H."/>
            <person name="Horiuchi T."/>
        </authorList>
    </citation>
    <scope>NUCLEOTIDE SEQUENCE [LARGE SCALE GENOMIC DNA]</scope>
    <source>
        <strain>K12 / W3110 / ATCC 27325 / DSM 5911</strain>
    </source>
</reference>
<reference key="4">
    <citation type="journal article" date="2005" name="Science">
        <title>Global topology analysis of the Escherichia coli inner membrane proteome.</title>
        <authorList>
            <person name="Daley D.O."/>
            <person name="Rapp M."/>
            <person name="Granseth E."/>
            <person name="Melen K."/>
            <person name="Drew D."/>
            <person name="von Heijne G."/>
        </authorList>
    </citation>
    <scope>TOPOLOGY [LARGE SCALE ANALYSIS]</scope>
    <source>
        <strain>K12 / MG1655 / ATCC 47076</strain>
    </source>
</reference>
<reference key="5">
    <citation type="journal article" date="2014" name="J. Biol. Chem.">
        <title>Assembly of lipopolysaccharide in Escherichia coli requires the essential LapB heat shock protein.</title>
        <authorList>
            <person name="Klein G."/>
            <person name="Kobylak N."/>
            <person name="Lindner B."/>
            <person name="Stupak A."/>
            <person name="Raina S."/>
        </authorList>
    </citation>
    <scope>FUNCTION</scope>
    <scope>SUBCELLULAR LOCATION</scope>
    <scope>INDUCTION</scope>
    <scope>DISRUPTION PHENOTYPE</scope>
</reference>
<feature type="chain" id="PRO_0000168886" description="Lipopolysaccharide assembly protein A">
    <location>
        <begin position="1"/>
        <end position="102"/>
    </location>
</feature>
<feature type="topological domain" description="Cytoplasmic" evidence="5">
    <location>
        <begin position="1"/>
        <end position="2"/>
    </location>
</feature>
<feature type="transmembrane region" description="Helical" evidence="1">
    <location>
        <begin position="3"/>
        <end position="23"/>
    </location>
</feature>
<feature type="topological domain" description="Periplasmic" evidence="5">
    <location>
        <begin position="24"/>
        <end position="43"/>
    </location>
</feature>
<feature type="transmembrane region" description="Helical" evidence="1">
    <location>
        <begin position="44"/>
        <end position="64"/>
    </location>
</feature>
<feature type="topological domain" description="Cytoplasmic" evidence="2">
    <location>
        <begin position="65"/>
        <end position="102"/>
    </location>
</feature>
<feature type="coiled-coil region" evidence="1">
    <location>
        <begin position="64"/>
        <end position="92"/>
    </location>
</feature>
<proteinExistence type="evidence at protein level"/>
<comment type="function">
    <text evidence="1 3">Involved in the assembly of lipopolysaccharide (LPS).</text>
</comment>
<comment type="subcellular location">
    <subcellularLocation>
        <location evidence="1 2 3">Cell inner membrane</location>
        <topology evidence="1">Multi-pass membrane protein</topology>
    </subcellularLocation>
    <text evidence="3">Copurifies with LptE/LptD, LptBFGC, LptA, DnaK/DnaJ and LPS.</text>
</comment>
<comment type="induction">
    <text evidence="3">Induced by heat shock, via RpoH.</text>
</comment>
<comment type="disruption phenotype">
    <text evidence="3">Disruption mutant shows accumulation of a few incomplete LPS precursors.</text>
</comment>
<comment type="similarity">
    <text evidence="1 5">Belongs to the LapA family.</text>
</comment>
<protein>
    <recommendedName>
        <fullName evidence="1 4">Lipopolysaccharide assembly protein A</fullName>
    </recommendedName>
</protein>
<organism>
    <name type="scientific">Escherichia coli (strain K12)</name>
    <dbReference type="NCBI Taxonomy" id="83333"/>
    <lineage>
        <taxon>Bacteria</taxon>
        <taxon>Pseudomonadati</taxon>
        <taxon>Pseudomonadota</taxon>
        <taxon>Gammaproteobacteria</taxon>
        <taxon>Enterobacterales</taxon>
        <taxon>Enterobacteriaceae</taxon>
        <taxon>Escherichia</taxon>
    </lineage>
</organism>